<protein>
    <recommendedName>
        <fullName evidence="1">UDP-N-acetylglucosamine--N-acetylmuramyl-(pentapeptide) pyrophosphoryl-undecaprenol N-acetylglucosamine transferase</fullName>
        <ecNumber evidence="1">2.4.1.227</ecNumber>
    </recommendedName>
    <alternativeName>
        <fullName evidence="1">Undecaprenyl-PP-MurNAc-pentapeptide-UDPGlcNAc GlcNAc transferase</fullName>
    </alternativeName>
</protein>
<organism>
    <name type="scientific">Streptococcus pneumoniae serotype 2 (strain D39 / NCTC 7466)</name>
    <dbReference type="NCBI Taxonomy" id="373153"/>
    <lineage>
        <taxon>Bacteria</taxon>
        <taxon>Bacillati</taxon>
        <taxon>Bacillota</taxon>
        <taxon>Bacilli</taxon>
        <taxon>Lactobacillales</taxon>
        <taxon>Streptococcaceae</taxon>
        <taxon>Streptococcus</taxon>
    </lineage>
</organism>
<keyword id="KW-0131">Cell cycle</keyword>
<keyword id="KW-0132">Cell division</keyword>
<keyword id="KW-1003">Cell membrane</keyword>
<keyword id="KW-0133">Cell shape</keyword>
<keyword id="KW-0961">Cell wall biogenesis/degradation</keyword>
<keyword id="KW-0328">Glycosyltransferase</keyword>
<keyword id="KW-0472">Membrane</keyword>
<keyword id="KW-0573">Peptidoglycan synthesis</keyword>
<keyword id="KW-1185">Reference proteome</keyword>
<keyword id="KW-0808">Transferase</keyword>
<accession>Q04LK0</accession>
<name>MURG_STRP2</name>
<proteinExistence type="inferred from homology"/>
<reference key="1">
    <citation type="journal article" date="2007" name="J. Bacteriol.">
        <title>Genome sequence of Avery's virulent serotype 2 strain D39 of Streptococcus pneumoniae and comparison with that of unencapsulated laboratory strain R6.</title>
        <authorList>
            <person name="Lanie J.A."/>
            <person name="Ng W.-L."/>
            <person name="Kazmierczak K.M."/>
            <person name="Andrzejewski T.M."/>
            <person name="Davidsen T.M."/>
            <person name="Wayne K.J."/>
            <person name="Tettelin H."/>
            <person name="Glass J.I."/>
            <person name="Winkler M.E."/>
        </authorList>
    </citation>
    <scope>NUCLEOTIDE SEQUENCE [LARGE SCALE GENOMIC DNA]</scope>
    <source>
        <strain>D39 / NCTC 7466</strain>
    </source>
</reference>
<evidence type="ECO:0000255" key="1">
    <source>
        <dbReference type="HAMAP-Rule" id="MF_00033"/>
    </source>
</evidence>
<dbReference type="EC" id="2.4.1.227" evidence="1"/>
<dbReference type="EMBL" id="CP000410">
    <property type="protein sequence ID" value="ABJ54267.1"/>
    <property type="molecule type" value="Genomic_DNA"/>
</dbReference>
<dbReference type="RefSeq" id="WP_000724838.1">
    <property type="nucleotide sequence ID" value="NZ_JAMLJR010000001.1"/>
</dbReference>
<dbReference type="SMR" id="Q04LK0"/>
<dbReference type="CAZy" id="GT28">
    <property type="family name" value="Glycosyltransferase Family 28"/>
</dbReference>
<dbReference type="PaxDb" id="373153-SPD_0599"/>
<dbReference type="KEGG" id="spd:SPD_0599"/>
<dbReference type="eggNOG" id="COG0707">
    <property type="taxonomic scope" value="Bacteria"/>
</dbReference>
<dbReference type="HOGENOM" id="CLU_037404_0_0_9"/>
<dbReference type="BioCyc" id="SPNE373153:G1G6V-664-MONOMER"/>
<dbReference type="UniPathway" id="UPA00219"/>
<dbReference type="Proteomes" id="UP000001452">
    <property type="component" value="Chromosome"/>
</dbReference>
<dbReference type="GO" id="GO:0005886">
    <property type="term" value="C:plasma membrane"/>
    <property type="evidence" value="ECO:0007669"/>
    <property type="project" value="UniProtKB-SubCell"/>
</dbReference>
<dbReference type="GO" id="GO:0050511">
    <property type="term" value="F:undecaprenyldiphospho-muramoylpentapeptide beta-N-acetylglucosaminyltransferase activity"/>
    <property type="evidence" value="ECO:0007669"/>
    <property type="project" value="UniProtKB-UniRule"/>
</dbReference>
<dbReference type="GO" id="GO:0005975">
    <property type="term" value="P:carbohydrate metabolic process"/>
    <property type="evidence" value="ECO:0007669"/>
    <property type="project" value="InterPro"/>
</dbReference>
<dbReference type="GO" id="GO:0051301">
    <property type="term" value="P:cell division"/>
    <property type="evidence" value="ECO:0007669"/>
    <property type="project" value="UniProtKB-KW"/>
</dbReference>
<dbReference type="GO" id="GO:0071555">
    <property type="term" value="P:cell wall organization"/>
    <property type="evidence" value="ECO:0007669"/>
    <property type="project" value="UniProtKB-KW"/>
</dbReference>
<dbReference type="GO" id="GO:0030259">
    <property type="term" value="P:lipid glycosylation"/>
    <property type="evidence" value="ECO:0007669"/>
    <property type="project" value="UniProtKB-UniRule"/>
</dbReference>
<dbReference type="GO" id="GO:0009252">
    <property type="term" value="P:peptidoglycan biosynthetic process"/>
    <property type="evidence" value="ECO:0007669"/>
    <property type="project" value="UniProtKB-UniRule"/>
</dbReference>
<dbReference type="GO" id="GO:0008360">
    <property type="term" value="P:regulation of cell shape"/>
    <property type="evidence" value="ECO:0007669"/>
    <property type="project" value="UniProtKB-KW"/>
</dbReference>
<dbReference type="CDD" id="cd03785">
    <property type="entry name" value="GT28_MurG"/>
    <property type="match status" value="1"/>
</dbReference>
<dbReference type="Gene3D" id="3.40.50.2000">
    <property type="entry name" value="Glycogen Phosphorylase B"/>
    <property type="match status" value="2"/>
</dbReference>
<dbReference type="HAMAP" id="MF_00033">
    <property type="entry name" value="MurG"/>
    <property type="match status" value="1"/>
</dbReference>
<dbReference type="InterPro" id="IPR006009">
    <property type="entry name" value="GlcNAc_MurG"/>
</dbReference>
<dbReference type="InterPro" id="IPR007235">
    <property type="entry name" value="Glyco_trans_28_C"/>
</dbReference>
<dbReference type="InterPro" id="IPR004276">
    <property type="entry name" value="GlycoTrans_28_N"/>
</dbReference>
<dbReference type="PANTHER" id="PTHR21015:SF27">
    <property type="entry name" value="UDP-N-ACETYLGLUCOSAMINE--N-ACETYLMURAMYL-(PENTAPEPTIDE) PYROPHOSPHORYL-UNDECAPRENOL N-ACETYLGLUCOSAMINE TRANSFERASE"/>
    <property type="match status" value="1"/>
</dbReference>
<dbReference type="PANTHER" id="PTHR21015">
    <property type="entry name" value="UDP-N-ACETYLGLUCOSAMINE--N-ACETYLMURAMYL-(PENTAPEPTIDE) PYROPHOSPHORYL-UNDECAPRENOL N-ACETYLGLUCOSAMINE TRANSFERASE 1"/>
    <property type="match status" value="1"/>
</dbReference>
<dbReference type="Pfam" id="PF04101">
    <property type="entry name" value="Glyco_tran_28_C"/>
    <property type="match status" value="1"/>
</dbReference>
<dbReference type="Pfam" id="PF03033">
    <property type="entry name" value="Glyco_transf_28"/>
    <property type="match status" value="1"/>
</dbReference>
<dbReference type="SUPFAM" id="SSF53756">
    <property type="entry name" value="UDP-Glycosyltransferase/glycogen phosphorylase"/>
    <property type="match status" value="1"/>
</dbReference>
<sequence length="352" mass="39448">MKKIVFTGGGTVGHVTLNLLLMPKFIEDGWEVHYIGDKRGIEHQEILKSGLDVTFHSIATGKLRRYFSWQNMLDVFKVGWGIVQSLFIMLRLRPQTLFSKGGFVSVPPVIAARVSGVPVFIHESDLSMGLANKIAYKFATKMYSTFEQASSLSKVEHVGAVTKVSDQKNPEPDELVDIQTHFNHKLPTVLFVGGSAGARVFNQLVTDHKKELTERYNIINLTGDSSLNELSQNLFRVDYVTDLYQPLMELADIVVTRGGANTIFELLAIAKLHVIVPLGREASRGDQIENAAYFVKKGYAEDLQESDLTLDSLEEKLSHLLSHKEDYQAKMKASKELKSLADFYQLLKKDLS</sequence>
<gene>
    <name evidence="1" type="primary">murG</name>
    <name type="ordered locus">SPD_0599</name>
</gene>
<feature type="chain" id="PRO_0000315176" description="UDP-N-acetylglucosamine--N-acetylmuramyl-(pentapeptide) pyrophosphoryl-undecaprenol N-acetylglucosamine transferase">
    <location>
        <begin position="1"/>
        <end position="352"/>
    </location>
</feature>
<feature type="binding site" evidence="1">
    <location>
        <position position="195"/>
    </location>
    <ligand>
        <name>UDP-N-acetyl-alpha-D-glucosamine</name>
        <dbReference type="ChEBI" id="CHEBI:57705"/>
    </ligand>
</feature>
<feature type="binding site" evidence="1">
    <location>
        <position position="287"/>
    </location>
    <ligand>
        <name>UDP-N-acetyl-alpha-D-glucosamine</name>
        <dbReference type="ChEBI" id="CHEBI:57705"/>
    </ligand>
</feature>
<comment type="function">
    <text evidence="1">Cell wall formation. Catalyzes the transfer of a GlcNAc subunit on undecaprenyl-pyrophosphoryl-MurNAc-pentapeptide (lipid intermediate I) to form undecaprenyl-pyrophosphoryl-MurNAc-(pentapeptide)GlcNAc (lipid intermediate II).</text>
</comment>
<comment type="catalytic activity">
    <reaction evidence="1">
        <text>Mur2Ac(oyl-L-Ala-gamma-D-Glu-L-Lys-D-Ala-D-Ala)-di-trans,octa-cis-undecaprenyl diphosphate + UDP-N-acetyl-alpha-D-glucosamine = beta-D-GlcNAc-(1-&gt;4)-Mur2Ac(oyl-L-Ala-gamma-D-Glu-L-Lys-D-Ala-D-Ala)-di-trans,octa-cis-undecaprenyl diphosphate + UDP + H(+)</text>
        <dbReference type="Rhea" id="RHEA:23192"/>
        <dbReference type="ChEBI" id="CHEBI:15378"/>
        <dbReference type="ChEBI" id="CHEBI:57705"/>
        <dbReference type="ChEBI" id="CHEBI:58223"/>
        <dbReference type="ChEBI" id="CHEBI:60032"/>
        <dbReference type="ChEBI" id="CHEBI:60033"/>
        <dbReference type="EC" id="2.4.1.227"/>
    </reaction>
</comment>
<comment type="pathway">
    <text evidence="1">Cell wall biogenesis; peptidoglycan biosynthesis.</text>
</comment>
<comment type="subcellular location">
    <subcellularLocation>
        <location evidence="1">Cell membrane</location>
        <topology evidence="1">Peripheral membrane protein</topology>
        <orientation evidence="1">Cytoplasmic side</orientation>
    </subcellularLocation>
</comment>
<comment type="similarity">
    <text evidence="1">Belongs to the glycosyltransferase 28 family. MurG subfamily.</text>
</comment>